<evidence type="ECO:0000250" key="1"/>
<evidence type="ECO:0000255" key="2"/>
<evidence type="ECO:0000305" key="3"/>
<protein>
    <recommendedName>
        <fullName>Apolipoprotein A-I-2</fullName>
        <shortName>Apo-AI-2</shortName>
        <shortName>ApoA-I-2</shortName>
    </recommendedName>
    <alternativeName>
        <fullName>Apolipoprotein A1-2</fullName>
    </alternativeName>
    <component>
        <recommendedName>
            <fullName>Proapolipoprotein A-I-2</fullName>
            <shortName>ProapoA-I-2</shortName>
        </recommendedName>
    </component>
</protein>
<keyword id="KW-0153">Cholesterol metabolism</keyword>
<keyword id="KW-0345">HDL</keyword>
<keyword id="KW-0443">Lipid metabolism</keyword>
<keyword id="KW-0445">Lipid transport</keyword>
<keyword id="KW-0677">Repeat</keyword>
<keyword id="KW-0964">Secreted</keyword>
<keyword id="KW-0732">Signal</keyword>
<keyword id="KW-0753">Steroid metabolism</keyword>
<keyword id="KW-1207">Sterol metabolism</keyword>
<keyword id="KW-0813">Transport</keyword>
<sequence length="262" mass="29680">MQFLALALTILLAAATQAVPMQADAPSQLEHVKVAMMEYMAQVKETAQRSIDHLDDTEYKEYKVQLSQSLDNLQQYAQTASESLAPYSEAIGVQLTEATAAVRAEVMKDVEELRSQLEPKRAELKEVLDKHIDEYRKRLEPLIKDIVEQRRTELEAFRVKIEPVVEEMRAKVSANVEETKAKLMPIVETVRAKLTERLEELRTLASPYAEEYKEQMVKAVGEVREKVVPLTTDFKGQLGPAAEQAKEKLMALYETISQAMKA</sequence>
<accession>O57524</accession>
<organism>
    <name type="scientific">Oncorhynchus mykiss</name>
    <name type="common">Rainbow trout</name>
    <name type="synonym">Salmo gairdneri</name>
    <dbReference type="NCBI Taxonomy" id="8022"/>
    <lineage>
        <taxon>Eukaryota</taxon>
        <taxon>Metazoa</taxon>
        <taxon>Chordata</taxon>
        <taxon>Craniata</taxon>
        <taxon>Vertebrata</taxon>
        <taxon>Euteleostomi</taxon>
        <taxon>Actinopterygii</taxon>
        <taxon>Neopterygii</taxon>
        <taxon>Teleostei</taxon>
        <taxon>Protacanthopterygii</taxon>
        <taxon>Salmoniformes</taxon>
        <taxon>Salmonidae</taxon>
        <taxon>Salmoninae</taxon>
        <taxon>Oncorhynchus</taxon>
    </lineage>
</organism>
<dbReference type="EMBL" id="AF042219">
    <property type="protein sequence ID" value="AAB96973.1"/>
    <property type="molecule type" value="mRNA"/>
</dbReference>
<dbReference type="RefSeq" id="NP_001117720.1">
    <property type="nucleotide sequence ID" value="NM_001124248.1"/>
</dbReference>
<dbReference type="RefSeq" id="XP_021437153.1">
    <property type="nucleotide sequence ID" value="XM_021581478.1"/>
</dbReference>
<dbReference type="SMR" id="O57524"/>
<dbReference type="Ensembl" id="ENSOMYT00000073119.2">
    <property type="protein sequence ID" value="ENSOMYP00000067141.1"/>
    <property type="gene ID" value="ENSOMYG00000031108.2"/>
</dbReference>
<dbReference type="GeneID" id="100135865"/>
<dbReference type="KEGG" id="omy:100135865"/>
<dbReference type="CTD" id="100135865"/>
<dbReference type="GeneTree" id="ENSGT00950000182929"/>
<dbReference type="OrthoDB" id="8727817at2759"/>
<dbReference type="Proteomes" id="UP000694395">
    <property type="component" value="Chromosome 24"/>
</dbReference>
<dbReference type="GO" id="GO:0042627">
    <property type="term" value="C:chylomicron"/>
    <property type="evidence" value="ECO:0007669"/>
    <property type="project" value="TreeGrafter"/>
</dbReference>
<dbReference type="GO" id="GO:1903561">
    <property type="term" value="C:extracellular vesicle"/>
    <property type="evidence" value="ECO:0007669"/>
    <property type="project" value="TreeGrafter"/>
</dbReference>
<dbReference type="GO" id="GO:0034364">
    <property type="term" value="C:high-density lipoprotein particle"/>
    <property type="evidence" value="ECO:0007669"/>
    <property type="project" value="UniProtKB-KW"/>
</dbReference>
<dbReference type="GO" id="GO:0034362">
    <property type="term" value="C:low-density lipoprotein particle"/>
    <property type="evidence" value="ECO:0007669"/>
    <property type="project" value="TreeGrafter"/>
</dbReference>
<dbReference type="GO" id="GO:0034361">
    <property type="term" value="C:very-low-density lipoprotein particle"/>
    <property type="evidence" value="ECO:0007669"/>
    <property type="project" value="TreeGrafter"/>
</dbReference>
<dbReference type="GO" id="GO:0120020">
    <property type="term" value="F:cholesterol transfer activity"/>
    <property type="evidence" value="ECO:0007669"/>
    <property type="project" value="TreeGrafter"/>
</dbReference>
<dbReference type="GO" id="GO:0060228">
    <property type="term" value="F:phosphatidylcholine-sterol O-acyltransferase activator activity"/>
    <property type="evidence" value="ECO:0007669"/>
    <property type="project" value="TreeGrafter"/>
</dbReference>
<dbReference type="GO" id="GO:0005543">
    <property type="term" value="F:phospholipid binding"/>
    <property type="evidence" value="ECO:0007669"/>
    <property type="project" value="TreeGrafter"/>
</dbReference>
<dbReference type="GO" id="GO:0055090">
    <property type="term" value="P:acylglycerol homeostasis"/>
    <property type="evidence" value="ECO:0007669"/>
    <property type="project" value="TreeGrafter"/>
</dbReference>
<dbReference type="GO" id="GO:0033344">
    <property type="term" value="P:cholesterol efflux"/>
    <property type="evidence" value="ECO:0007669"/>
    <property type="project" value="TreeGrafter"/>
</dbReference>
<dbReference type="GO" id="GO:0008203">
    <property type="term" value="P:cholesterol metabolic process"/>
    <property type="evidence" value="ECO:0007669"/>
    <property type="project" value="UniProtKB-KW"/>
</dbReference>
<dbReference type="GO" id="GO:0042157">
    <property type="term" value="P:lipoprotein metabolic process"/>
    <property type="evidence" value="ECO:0007669"/>
    <property type="project" value="InterPro"/>
</dbReference>
<dbReference type="GO" id="GO:0033700">
    <property type="term" value="P:phospholipid efflux"/>
    <property type="evidence" value="ECO:0007669"/>
    <property type="project" value="TreeGrafter"/>
</dbReference>
<dbReference type="FunFam" id="1.20.120.20:FF:000007">
    <property type="entry name" value="Apolipoprotein A-IV a"/>
    <property type="match status" value="1"/>
</dbReference>
<dbReference type="Gene3D" id="1.20.5.20">
    <property type="match status" value="1"/>
</dbReference>
<dbReference type="Gene3D" id="1.20.120.20">
    <property type="entry name" value="Apolipoprotein"/>
    <property type="match status" value="2"/>
</dbReference>
<dbReference type="InterPro" id="IPR000074">
    <property type="entry name" value="ApoA_E"/>
</dbReference>
<dbReference type="InterPro" id="IPR050163">
    <property type="entry name" value="Apolipoprotein_A1/A4/E"/>
</dbReference>
<dbReference type="PANTHER" id="PTHR18976">
    <property type="entry name" value="APOLIPOPROTEIN"/>
    <property type="match status" value="1"/>
</dbReference>
<dbReference type="PANTHER" id="PTHR18976:SF11">
    <property type="entry name" value="APOLIPOPROTEIN A-I"/>
    <property type="match status" value="1"/>
</dbReference>
<dbReference type="Pfam" id="PF01442">
    <property type="entry name" value="Apolipoprotein"/>
    <property type="match status" value="1"/>
</dbReference>
<dbReference type="SUPFAM" id="SSF58113">
    <property type="entry name" value="Apolipoprotein A-I"/>
    <property type="match status" value="1"/>
</dbReference>
<feature type="signal peptide" evidence="2">
    <location>
        <begin position="1"/>
        <end position="18"/>
    </location>
</feature>
<feature type="chain" id="PRO_0000425345" description="Proapolipoprotein A-I-2">
    <location>
        <begin position="19"/>
        <end position="262"/>
    </location>
</feature>
<feature type="chain" id="PRO_0000001968" description="Apolipoprotein A-I-2">
    <location>
        <begin position="24"/>
        <end position="262"/>
    </location>
</feature>
<feature type="repeat" description="1">
    <location>
        <begin position="64"/>
        <end position="85"/>
    </location>
</feature>
<feature type="repeat" description="2">
    <location>
        <begin position="87"/>
        <end position="107"/>
    </location>
</feature>
<feature type="repeat" description="3; half-length">
    <location>
        <begin position="108"/>
        <end position="118"/>
    </location>
</feature>
<feature type="repeat" description="4">
    <location>
        <begin position="119"/>
        <end position="140"/>
    </location>
</feature>
<feature type="repeat" description="5">
    <location>
        <begin position="141"/>
        <end position="162"/>
    </location>
</feature>
<feature type="repeat" description="6">
    <location>
        <begin position="163"/>
        <end position="184"/>
    </location>
</feature>
<feature type="repeat" description="7">
    <location>
        <begin position="185"/>
        <end position="206"/>
    </location>
</feature>
<feature type="repeat" description="8">
    <location>
        <begin position="207"/>
        <end position="228"/>
    </location>
</feature>
<feature type="repeat" description="9; half-length">
    <location>
        <begin position="229"/>
        <end position="239"/>
    </location>
</feature>
<feature type="repeat" description="10">
    <location>
        <begin position="240"/>
        <end position="262"/>
    </location>
</feature>
<feature type="region of interest" description="3 X approximate tandem repeats">
    <location>
        <begin position="32"/>
        <end position="63"/>
    </location>
</feature>
<feature type="region of interest" description="10 X approximate tandem repeats">
    <location>
        <begin position="64"/>
        <end position="262"/>
    </location>
</feature>
<reference key="1">
    <citation type="journal article" date="1992" name="J. Lipid Res.">
        <title>Expression of rainbow trout apolipoprotein A-I genes in liver and hepatocellular carcinoma.</title>
        <authorList>
            <person name="Delcuve G.P."/>
            <person name="Sun J.M."/>
            <person name="Davie J.R."/>
        </authorList>
    </citation>
    <scope>NUCLEOTIDE SEQUENCE [MRNA]</scope>
    <source>
        <strain>Shasta</strain>
        <tissue>Liver</tissue>
    </source>
</reference>
<name>APA12_ONCMY</name>
<comment type="function">
    <text evidence="1">Participates in the reverse transport of cholesterol from tissues to the liver for excretion by promoting cholesterol efflux from tissues and by acting as a cofactor for the lecithin cholesterol acyltransferase (LCAT).</text>
</comment>
<comment type="subcellular location">
    <subcellularLocation>
        <location evidence="1">Secreted</location>
    </subcellularLocation>
</comment>
<comment type="similarity">
    <text evidence="3">Belongs to the apolipoprotein A1/A4/E family.</text>
</comment>
<proteinExistence type="evidence at transcript level"/>